<organism>
    <name type="scientific">Xanthomonas campestris pv. campestris (strain B100)</name>
    <dbReference type="NCBI Taxonomy" id="509169"/>
    <lineage>
        <taxon>Bacteria</taxon>
        <taxon>Pseudomonadati</taxon>
        <taxon>Pseudomonadota</taxon>
        <taxon>Gammaproteobacteria</taxon>
        <taxon>Lysobacterales</taxon>
        <taxon>Lysobacteraceae</taxon>
        <taxon>Xanthomonas</taxon>
    </lineage>
</organism>
<gene>
    <name evidence="1" type="primary">mnmE</name>
    <name evidence="1" type="synonym">trmE</name>
    <name type="ordered locus">xcc-b100_4464</name>
</gene>
<reference key="1">
    <citation type="journal article" date="2008" name="J. Biotechnol.">
        <title>The genome of Xanthomonas campestris pv. campestris B100 and its use for the reconstruction of metabolic pathways involved in xanthan biosynthesis.</title>
        <authorList>
            <person name="Vorhoelter F.-J."/>
            <person name="Schneiker S."/>
            <person name="Goesmann A."/>
            <person name="Krause L."/>
            <person name="Bekel T."/>
            <person name="Kaiser O."/>
            <person name="Linke B."/>
            <person name="Patschkowski T."/>
            <person name="Rueckert C."/>
            <person name="Schmid J."/>
            <person name="Sidhu V.K."/>
            <person name="Sieber V."/>
            <person name="Tauch A."/>
            <person name="Watt S.A."/>
            <person name="Weisshaar B."/>
            <person name="Becker A."/>
            <person name="Niehaus K."/>
            <person name="Puehler A."/>
        </authorList>
    </citation>
    <scope>NUCLEOTIDE SEQUENCE [LARGE SCALE GENOMIC DNA]</scope>
    <source>
        <strain>B100</strain>
    </source>
</reference>
<accession>B0RMM4</accession>
<sequence>MNASPSTIVAIATAAGTGGIGIVRLSGPQSVQIAAALGIAGLQSRHARYARFRDAQGEVIDDGIAVWFPAPHSFTGEEVVELQGHGSPVLLRQLVARCIALGARQARAGEFSERAFLNGKLDLAQAEAIADLIAAGDLRAARAARRSLDGVFSRRVDAVSESLTRLRIHVEAAIDFADEPLDTLGGAQVREELTRTRALLAQLLRDAERGRKLRDGLHAVLIGPPNAGKSSLLNALAGSDRAIVTDVAGTTRDTLHEAIQLDGFELTLVDTAGLREGGDAIEREGMRRARAELQRADLALIVLDARDPQAARDALGDAIDAVPRRLWIHNKCDLLAVAGPMDADAIAVSAVTGQGLEHLHTRLRELALGDGIESVDGEFSARTRHVDALHRAEQHADAADLELRYEQLELAAEELRLAHEALGEITGKLSADDLLGKIFSSFCIGK</sequence>
<comment type="function">
    <text evidence="1">Exhibits a very high intrinsic GTPase hydrolysis rate. Involved in the addition of a carboxymethylaminomethyl (cmnm) group at the wobble position (U34) of certain tRNAs, forming tRNA-cmnm(5)s(2)U34.</text>
</comment>
<comment type="cofactor">
    <cofactor evidence="1">
        <name>K(+)</name>
        <dbReference type="ChEBI" id="CHEBI:29103"/>
    </cofactor>
    <text evidence="1">Binds 1 potassium ion per subunit.</text>
</comment>
<comment type="subunit">
    <text evidence="1">Homodimer. Heterotetramer of two MnmE and two MnmG subunits.</text>
</comment>
<comment type="subcellular location">
    <subcellularLocation>
        <location evidence="1">Cytoplasm</location>
    </subcellularLocation>
</comment>
<comment type="similarity">
    <text evidence="1">Belongs to the TRAFAC class TrmE-Era-EngA-EngB-Septin-like GTPase superfamily. TrmE GTPase family.</text>
</comment>
<dbReference type="EC" id="3.6.-.-" evidence="1"/>
<dbReference type="EMBL" id="AM920689">
    <property type="protein sequence ID" value="CAP53837.1"/>
    <property type="molecule type" value="Genomic_DNA"/>
</dbReference>
<dbReference type="SMR" id="B0RMM4"/>
<dbReference type="KEGG" id="xca:xcc-b100_4464"/>
<dbReference type="HOGENOM" id="CLU_019624_4_1_6"/>
<dbReference type="Proteomes" id="UP000001188">
    <property type="component" value="Chromosome"/>
</dbReference>
<dbReference type="GO" id="GO:0005829">
    <property type="term" value="C:cytosol"/>
    <property type="evidence" value="ECO:0007669"/>
    <property type="project" value="TreeGrafter"/>
</dbReference>
<dbReference type="GO" id="GO:0005525">
    <property type="term" value="F:GTP binding"/>
    <property type="evidence" value="ECO:0007669"/>
    <property type="project" value="UniProtKB-UniRule"/>
</dbReference>
<dbReference type="GO" id="GO:0003924">
    <property type="term" value="F:GTPase activity"/>
    <property type="evidence" value="ECO:0007669"/>
    <property type="project" value="UniProtKB-UniRule"/>
</dbReference>
<dbReference type="GO" id="GO:0046872">
    <property type="term" value="F:metal ion binding"/>
    <property type="evidence" value="ECO:0007669"/>
    <property type="project" value="UniProtKB-KW"/>
</dbReference>
<dbReference type="GO" id="GO:0030488">
    <property type="term" value="P:tRNA methylation"/>
    <property type="evidence" value="ECO:0007669"/>
    <property type="project" value="TreeGrafter"/>
</dbReference>
<dbReference type="GO" id="GO:0002098">
    <property type="term" value="P:tRNA wobble uridine modification"/>
    <property type="evidence" value="ECO:0007669"/>
    <property type="project" value="TreeGrafter"/>
</dbReference>
<dbReference type="CDD" id="cd04164">
    <property type="entry name" value="trmE"/>
    <property type="match status" value="1"/>
</dbReference>
<dbReference type="CDD" id="cd14858">
    <property type="entry name" value="TrmE_N"/>
    <property type="match status" value="1"/>
</dbReference>
<dbReference type="FunFam" id="3.40.50.300:FF:001376">
    <property type="entry name" value="tRNA modification GTPase MnmE"/>
    <property type="match status" value="1"/>
</dbReference>
<dbReference type="Gene3D" id="3.40.50.300">
    <property type="entry name" value="P-loop containing nucleotide triphosphate hydrolases"/>
    <property type="match status" value="1"/>
</dbReference>
<dbReference type="Gene3D" id="3.30.1360.120">
    <property type="entry name" value="Probable tRNA modification gtpase trme, domain 1"/>
    <property type="match status" value="1"/>
</dbReference>
<dbReference type="Gene3D" id="1.20.120.430">
    <property type="entry name" value="tRNA modification GTPase MnmE domain 2"/>
    <property type="match status" value="1"/>
</dbReference>
<dbReference type="HAMAP" id="MF_00379">
    <property type="entry name" value="GTPase_MnmE"/>
    <property type="match status" value="1"/>
</dbReference>
<dbReference type="InterPro" id="IPR031168">
    <property type="entry name" value="G_TrmE"/>
</dbReference>
<dbReference type="InterPro" id="IPR006073">
    <property type="entry name" value="GTP-bd"/>
</dbReference>
<dbReference type="InterPro" id="IPR018948">
    <property type="entry name" value="GTP-bd_TrmE_N"/>
</dbReference>
<dbReference type="InterPro" id="IPR004520">
    <property type="entry name" value="GTPase_MnmE"/>
</dbReference>
<dbReference type="InterPro" id="IPR027368">
    <property type="entry name" value="MnmE_dom2"/>
</dbReference>
<dbReference type="InterPro" id="IPR025867">
    <property type="entry name" value="MnmE_helical"/>
</dbReference>
<dbReference type="InterPro" id="IPR027417">
    <property type="entry name" value="P-loop_NTPase"/>
</dbReference>
<dbReference type="InterPro" id="IPR005225">
    <property type="entry name" value="Small_GTP-bd"/>
</dbReference>
<dbReference type="InterPro" id="IPR027266">
    <property type="entry name" value="TrmE/GcvT_dom1"/>
</dbReference>
<dbReference type="NCBIfam" id="TIGR00450">
    <property type="entry name" value="mnmE_trmE_thdF"/>
    <property type="match status" value="1"/>
</dbReference>
<dbReference type="NCBIfam" id="NF003661">
    <property type="entry name" value="PRK05291.1-3"/>
    <property type="match status" value="1"/>
</dbReference>
<dbReference type="NCBIfam" id="TIGR00231">
    <property type="entry name" value="small_GTP"/>
    <property type="match status" value="1"/>
</dbReference>
<dbReference type="PANTHER" id="PTHR42714">
    <property type="entry name" value="TRNA MODIFICATION GTPASE GTPBP3"/>
    <property type="match status" value="1"/>
</dbReference>
<dbReference type="PANTHER" id="PTHR42714:SF2">
    <property type="entry name" value="TRNA MODIFICATION GTPASE GTPBP3, MITOCHONDRIAL"/>
    <property type="match status" value="1"/>
</dbReference>
<dbReference type="Pfam" id="PF01926">
    <property type="entry name" value="MMR_HSR1"/>
    <property type="match status" value="1"/>
</dbReference>
<dbReference type="Pfam" id="PF12631">
    <property type="entry name" value="MnmE_helical"/>
    <property type="match status" value="1"/>
</dbReference>
<dbReference type="Pfam" id="PF10396">
    <property type="entry name" value="TrmE_N"/>
    <property type="match status" value="1"/>
</dbReference>
<dbReference type="PRINTS" id="PR00326">
    <property type="entry name" value="GTP1OBG"/>
</dbReference>
<dbReference type="SUPFAM" id="SSF52540">
    <property type="entry name" value="P-loop containing nucleoside triphosphate hydrolases"/>
    <property type="match status" value="1"/>
</dbReference>
<dbReference type="PROSITE" id="PS51709">
    <property type="entry name" value="G_TRME"/>
    <property type="match status" value="1"/>
</dbReference>
<keyword id="KW-0963">Cytoplasm</keyword>
<keyword id="KW-0342">GTP-binding</keyword>
<keyword id="KW-0378">Hydrolase</keyword>
<keyword id="KW-0460">Magnesium</keyword>
<keyword id="KW-0479">Metal-binding</keyword>
<keyword id="KW-0547">Nucleotide-binding</keyword>
<keyword id="KW-0630">Potassium</keyword>
<keyword id="KW-0819">tRNA processing</keyword>
<feature type="chain" id="PRO_0000345941" description="tRNA modification GTPase MnmE">
    <location>
        <begin position="1"/>
        <end position="446"/>
    </location>
</feature>
<feature type="domain" description="TrmE-type G">
    <location>
        <begin position="216"/>
        <end position="368"/>
    </location>
</feature>
<feature type="binding site" evidence="1">
    <location>
        <position position="24"/>
    </location>
    <ligand>
        <name>(6S)-5-formyl-5,6,7,8-tetrahydrofolate</name>
        <dbReference type="ChEBI" id="CHEBI:57457"/>
    </ligand>
</feature>
<feature type="binding site" evidence="1">
    <location>
        <position position="81"/>
    </location>
    <ligand>
        <name>(6S)-5-formyl-5,6,7,8-tetrahydrofolate</name>
        <dbReference type="ChEBI" id="CHEBI:57457"/>
    </ligand>
</feature>
<feature type="binding site" evidence="1">
    <location>
        <position position="120"/>
    </location>
    <ligand>
        <name>(6S)-5-formyl-5,6,7,8-tetrahydrofolate</name>
        <dbReference type="ChEBI" id="CHEBI:57457"/>
    </ligand>
</feature>
<feature type="binding site" evidence="1">
    <location>
        <begin position="226"/>
        <end position="231"/>
    </location>
    <ligand>
        <name>GTP</name>
        <dbReference type="ChEBI" id="CHEBI:37565"/>
    </ligand>
</feature>
<feature type="binding site" evidence="1">
    <location>
        <position position="226"/>
    </location>
    <ligand>
        <name>K(+)</name>
        <dbReference type="ChEBI" id="CHEBI:29103"/>
    </ligand>
</feature>
<feature type="binding site" evidence="1">
    <location>
        <position position="230"/>
    </location>
    <ligand>
        <name>Mg(2+)</name>
        <dbReference type="ChEBI" id="CHEBI:18420"/>
    </ligand>
</feature>
<feature type="binding site" evidence="1">
    <location>
        <begin position="245"/>
        <end position="251"/>
    </location>
    <ligand>
        <name>GTP</name>
        <dbReference type="ChEBI" id="CHEBI:37565"/>
    </ligand>
</feature>
<feature type="binding site" evidence="1">
    <location>
        <position position="245"/>
    </location>
    <ligand>
        <name>K(+)</name>
        <dbReference type="ChEBI" id="CHEBI:29103"/>
    </ligand>
</feature>
<feature type="binding site" evidence="1">
    <location>
        <position position="247"/>
    </location>
    <ligand>
        <name>K(+)</name>
        <dbReference type="ChEBI" id="CHEBI:29103"/>
    </ligand>
</feature>
<feature type="binding site" evidence="1">
    <location>
        <position position="250"/>
    </location>
    <ligand>
        <name>K(+)</name>
        <dbReference type="ChEBI" id="CHEBI:29103"/>
    </ligand>
</feature>
<feature type="binding site" evidence="1">
    <location>
        <position position="251"/>
    </location>
    <ligand>
        <name>Mg(2+)</name>
        <dbReference type="ChEBI" id="CHEBI:18420"/>
    </ligand>
</feature>
<feature type="binding site" evidence="1">
    <location>
        <begin position="270"/>
        <end position="273"/>
    </location>
    <ligand>
        <name>GTP</name>
        <dbReference type="ChEBI" id="CHEBI:37565"/>
    </ligand>
</feature>
<feature type="binding site" evidence="1">
    <location>
        <position position="446"/>
    </location>
    <ligand>
        <name>(6S)-5-formyl-5,6,7,8-tetrahydrofolate</name>
        <dbReference type="ChEBI" id="CHEBI:57457"/>
    </ligand>
</feature>
<name>MNME_XANCB</name>
<evidence type="ECO:0000255" key="1">
    <source>
        <dbReference type="HAMAP-Rule" id="MF_00379"/>
    </source>
</evidence>
<proteinExistence type="inferred from homology"/>
<protein>
    <recommendedName>
        <fullName evidence="1">tRNA modification GTPase MnmE</fullName>
        <ecNumber evidence="1">3.6.-.-</ecNumber>
    </recommendedName>
</protein>